<gene>
    <name evidence="1" type="primary">atpG</name>
    <name type="ordered locus">SPT_1445</name>
</gene>
<name>ATPG_STRZT</name>
<dbReference type="EMBL" id="CP000921">
    <property type="protein sequence ID" value="ACO22835.1"/>
    <property type="molecule type" value="Genomic_DNA"/>
</dbReference>
<dbReference type="RefSeq" id="WP_000301210.1">
    <property type="nucleotide sequence ID" value="NC_012469.1"/>
</dbReference>
<dbReference type="SMR" id="C1CSC9"/>
<dbReference type="KEGG" id="snt:SPT_1445"/>
<dbReference type="HOGENOM" id="CLU_050669_0_1_9"/>
<dbReference type="GO" id="GO:0005886">
    <property type="term" value="C:plasma membrane"/>
    <property type="evidence" value="ECO:0007669"/>
    <property type="project" value="UniProtKB-SubCell"/>
</dbReference>
<dbReference type="GO" id="GO:0045259">
    <property type="term" value="C:proton-transporting ATP synthase complex"/>
    <property type="evidence" value="ECO:0007669"/>
    <property type="project" value="UniProtKB-KW"/>
</dbReference>
<dbReference type="GO" id="GO:0005524">
    <property type="term" value="F:ATP binding"/>
    <property type="evidence" value="ECO:0007669"/>
    <property type="project" value="UniProtKB-UniRule"/>
</dbReference>
<dbReference type="GO" id="GO:0046933">
    <property type="term" value="F:proton-transporting ATP synthase activity, rotational mechanism"/>
    <property type="evidence" value="ECO:0007669"/>
    <property type="project" value="UniProtKB-UniRule"/>
</dbReference>
<dbReference type="GO" id="GO:0042777">
    <property type="term" value="P:proton motive force-driven plasma membrane ATP synthesis"/>
    <property type="evidence" value="ECO:0007669"/>
    <property type="project" value="UniProtKB-UniRule"/>
</dbReference>
<dbReference type="CDD" id="cd12151">
    <property type="entry name" value="F1-ATPase_gamma"/>
    <property type="match status" value="1"/>
</dbReference>
<dbReference type="FunFam" id="3.40.1380.10:FF:000002">
    <property type="entry name" value="ATP synthase gamma chain"/>
    <property type="match status" value="1"/>
</dbReference>
<dbReference type="Gene3D" id="3.40.1380.10">
    <property type="match status" value="1"/>
</dbReference>
<dbReference type="Gene3D" id="1.10.287.80">
    <property type="entry name" value="ATP synthase, gamma subunit, helix hairpin domain"/>
    <property type="match status" value="1"/>
</dbReference>
<dbReference type="HAMAP" id="MF_00815">
    <property type="entry name" value="ATP_synth_gamma_bact"/>
    <property type="match status" value="1"/>
</dbReference>
<dbReference type="InterPro" id="IPR035968">
    <property type="entry name" value="ATP_synth_F1_ATPase_gsu"/>
</dbReference>
<dbReference type="InterPro" id="IPR000131">
    <property type="entry name" value="ATP_synth_F1_gsu"/>
</dbReference>
<dbReference type="InterPro" id="IPR023632">
    <property type="entry name" value="ATP_synth_F1_gsu_CS"/>
</dbReference>
<dbReference type="NCBIfam" id="TIGR01146">
    <property type="entry name" value="ATPsyn_F1gamma"/>
    <property type="match status" value="1"/>
</dbReference>
<dbReference type="NCBIfam" id="NF004147">
    <property type="entry name" value="PRK05621.2-1"/>
    <property type="match status" value="1"/>
</dbReference>
<dbReference type="PANTHER" id="PTHR11693">
    <property type="entry name" value="ATP SYNTHASE GAMMA CHAIN"/>
    <property type="match status" value="1"/>
</dbReference>
<dbReference type="PANTHER" id="PTHR11693:SF22">
    <property type="entry name" value="ATP SYNTHASE SUBUNIT GAMMA, MITOCHONDRIAL"/>
    <property type="match status" value="1"/>
</dbReference>
<dbReference type="Pfam" id="PF00231">
    <property type="entry name" value="ATP-synt"/>
    <property type="match status" value="1"/>
</dbReference>
<dbReference type="PRINTS" id="PR00126">
    <property type="entry name" value="ATPASEGAMMA"/>
</dbReference>
<dbReference type="SUPFAM" id="SSF52943">
    <property type="entry name" value="ATP synthase (F1-ATPase), gamma subunit"/>
    <property type="match status" value="1"/>
</dbReference>
<dbReference type="PROSITE" id="PS00153">
    <property type="entry name" value="ATPASE_GAMMA"/>
    <property type="match status" value="1"/>
</dbReference>
<reference key="1">
    <citation type="journal article" date="2010" name="Genome Biol.">
        <title>Structure and dynamics of the pan-genome of Streptococcus pneumoniae and closely related species.</title>
        <authorList>
            <person name="Donati C."/>
            <person name="Hiller N.L."/>
            <person name="Tettelin H."/>
            <person name="Muzzi A."/>
            <person name="Croucher N.J."/>
            <person name="Angiuoli S.V."/>
            <person name="Oggioni M."/>
            <person name="Dunning Hotopp J.C."/>
            <person name="Hu F.Z."/>
            <person name="Riley D.R."/>
            <person name="Covacci A."/>
            <person name="Mitchell T.J."/>
            <person name="Bentley S.D."/>
            <person name="Kilian M."/>
            <person name="Ehrlich G.D."/>
            <person name="Rappuoli R."/>
            <person name="Moxon E.R."/>
            <person name="Masignani V."/>
        </authorList>
    </citation>
    <scope>NUCLEOTIDE SEQUENCE [LARGE SCALE GENOMIC DNA]</scope>
    <source>
        <strain>Taiwan19F-14</strain>
    </source>
</reference>
<evidence type="ECO:0000255" key="1">
    <source>
        <dbReference type="HAMAP-Rule" id="MF_00815"/>
    </source>
</evidence>
<feature type="chain" id="PRO_1000148644" description="ATP synthase gamma chain">
    <location>
        <begin position="1"/>
        <end position="292"/>
    </location>
</feature>
<sequence length="292" mass="32309">MAVSLNDIKTKIASTKNTSQITNAMQMVSAAKLGRSEEAARNFQVYAQKVRKLLTDILHGNGAGASTNPMLISRSVKKTGYIVITSDRGLVGGYNSSILKAVMELKEEYHPDGKGFEMICIGGMGADFFKARGIQPLYELRGLADQPSFDQVRKIISKTVEMYQNELFDELYVCYNHHVNTLTSQMRVEQMLPIVDLDPNEADEEYSLTFELETSREEILEQLLPQFAESMIYGAIIDAKTAENAAGMTAMQTATDNAKKVINDLTIQYNRARQAAITQEITEIVAGASALE</sequence>
<keyword id="KW-0066">ATP synthesis</keyword>
<keyword id="KW-1003">Cell membrane</keyword>
<keyword id="KW-0139">CF(1)</keyword>
<keyword id="KW-0375">Hydrogen ion transport</keyword>
<keyword id="KW-0406">Ion transport</keyword>
<keyword id="KW-0472">Membrane</keyword>
<keyword id="KW-0813">Transport</keyword>
<protein>
    <recommendedName>
        <fullName evidence="1">ATP synthase gamma chain</fullName>
    </recommendedName>
    <alternativeName>
        <fullName evidence="1">ATP synthase F1 sector gamma subunit</fullName>
    </alternativeName>
    <alternativeName>
        <fullName evidence="1">F-ATPase gamma subunit</fullName>
    </alternativeName>
</protein>
<comment type="function">
    <text evidence="1">Produces ATP from ADP in the presence of a proton gradient across the membrane. The gamma chain is believed to be important in regulating ATPase activity and the flow of protons through the CF(0) complex.</text>
</comment>
<comment type="subunit">
    <text evidence="1">F-type ATPases have 2 components, CF(1) - the catalytic core - and CF(0) - the membrane proton channel. CF(1) has five subunits: alpha(3), beta(3), gamma(1), delta(1), epsilon(1). CF(0) has three main subunits: a, b and c.</text>
</comment>
<comment type="subcellular location">
    <subcellularLocation>
        <location evidence="1">Cell membrane</location>
        <topology evidence="1">Peripheral membrane protein</topology>
    </subcellularLocation>
</comment>
<comment type="similarity">
    <text evidence="1">Belongs to the ATPase gamma chain family.</text>
</comment>
<proteinExistence type="inferred from homology"/>
<organism>
    <name type="scientific">Streptococcus pneumoniae (strain Taiwan19F-14)</name>
    <dbReference type="NCBI Taxonomy" id="487213"/>
    <lineage>
        <taxon>Bacteria</taxon>
        <taxon>Bacillati</taxon>
        <taxon>Bacillota</taxon>
        <taxon>Bacilli</taxon>
        <taxon>Lactobacillales</taxon>
        <taxon>Streptococcaceae</taxon>
        <taxon>Streptococcus</taxon>
    </lineage>
</organism>
<accession>C1CSC9</accession>